<comment type="function">
    <text evidence="2">Catalyzes the reversible isomerization of alpha-D-glucose 1-phosphate to alpha-D-glucose 6-phosphate (By similarity). The mechanism proceeds via the intermediate compound alpha-D-glucose 1,6-bisphosphate (By similarity). Key enzyme in hexose metabolism (By similarity). The reverse reaction is an essential step for biosynthesis because glucose 1-phosphate is the starting point for the synthesis of UDP-glucose, which acts as a precursor for the synthesis of oligosaccharides and trehalose (By similarity).</text>
</comment>
<comment type="catalytic activity">
    <reaction evidence="2">
        <text>alpha-D-glucose 1-phosphate = alpha-D-glucose 6-phosphate</text>
        <dbReference type="Rhea" id="RHEA:23536"/>
        <dbReference type="ChEBI" id="CHEBI:58225"/>
        <dbReference type="ChEBI" id="CHEBI:58601"/>
        <dbReference type="EC" id="5.4.2.2"/>
    </reaction>
</comment>
<comment type="catalytic activity">
    <reaction evidence="2">
        <text>O-phospho-L-seryl-[protein] + alpha-D-glucose 1-phosphate = alpha-D-glucose 1,6-bisphosphate + L-seryl-[protein]</text>
        <dbReference type="Rhea" id="RHEA:68748"/>
        <dbReference type="Rhea" id="RHEA-COMP:9863"/>
        <dbReference type="Rhea" id="RHEA-COMP:11604"/>
        <dbReference type="ChEBI" id="CHEBI:29999"/>
        <dbReference type="ChEBI" id="CHEBI:58392"/>
        <dbReference type="ChEBI" id="CHEBI:58601"/>
        <dbReference type="ChEBI" id="CHEBI:83421"/>
    </reaction>
</comment>
<comment type="catalytic activity">
    <reaction evidence="2">
        <text>alpha-D-glucose 1,6-bisphosphate + L-seryl-[protein] = O-phospho-L-seryl-[protein] + alpha-D-glucose 6-phosphate</text>
        <dbReference type="Rhea" id="RHEA:68752"/>
        <dbReference type="Rhea" id="RHEA-COMP:9863"/>
        <dbReference type="Rhea" id="RHEA-COMP:11604"/>
        <dbReference type="ChEBI" id="CHEBI:29999"/>
        <dbReference type="ChEBI" id="CHEBI:58225"/>
        <dbReference type="ChEBI" id="CHEBI:58392"/>
        <dbReference type="ChEBI" id="CHEBI:83421"/>
    </reaction>
</comment>
<comment type="cofactor">
    <cofactor evidence="1">
        <name>Mg(2+)</name>
        <dbReference type="ChEBI" id="CHEBI:18420"/>
    </cofactor>
    <text evidence="1">Binds 1 Mg(2+) ion per subunit.</text>
</comment>
<comment type="subunit">
    <text evidence="2">Monomer.</text>
</comment>
<comment type="subcellular location">
    <subcellularLocation>
        <location evidence="3">Cytoplasm</location>
    </subcellularLocation>
    <subcellularLocation>
        <location evidence="3">Nucleus</location>
    </subcellularLocation>
</comment>
<comment type="similarity">
    <text evidence="5">Belongs to the phosphohexose mutase family.</text>
</comment>
<name>PGM_SCHPO</name>
<evidence type="ECO:0000250" key="1">
    <source>
        <dbReference type="UniProtKB" id="P00949"/>
    </source>
</evidence>
<evidence type="ECO:0000250" key="2">
    <source>
        <dbReference type="UniProtKB" id="P37012"/>
    </source>
</evidence>
<evidence type="ECO:0000269" key="3">
    <source>
    </source>
</evidence>
<evidence type="ECO:0000269" key="4">
    <source>
    </source>
</evidence>
<evidence type="ECO:0000305" key="5"/>
<sequence>MIETIPTKPYEGQRPGTSGLRKKVTVFEQPNYVENFVQATMDVVEPSAKGAHLVVGGDGRYFNFHAIQVIAAIAAGNGVEKIIVGTNGYLSTPAASHIIRKYKLTGGIILTASHNAGGPKNDFGIKYNLGNGGPAPESVTEKIYSITKTISEYKMVKIPPLDLTTTGVRRYGPLTVEVIDPVKDYVQLMKEIFDFDLIRSFLSKNPDFTFVFDALHGITGPYGEALFCKELGMPSSVCQNCKPLPDFGGGHPDPNLTYAKSLVARVDRDNIVMGAASDGDGDRNMIYGANAFVTPSDSVAIIAHHAELIPYFRDGGVHGFARSMPTSGAIDRVGKYKGKNVYEVPTGWKFFCNLFDAKRLSICGEESFGTGSDHIREKDGVWGILCWLNILAGLNAQNPKIKTLIDVKKDFYNIYGRTFYSRYDYEELENEAAGKVMDRMRAIADDKSKVGEAVLPGFVVSEAGDFEYHDPIDGSESKHQGLYIKFENGSRIVTRLSGTGSSGATLRLYMEKHESDSSKFDLDAQVALKPVVHAALEILALEELTGRKEPTVIT</sequence>
<feature type="chain" id="PRO_0000147795" description="Phosphoglucomutase">
    <location>
        <begin position="1"/>
        <end position="554"/>
    </location>
</feature>
<feature type="active site" description="Phosphoserine intermediate" evidence="1">
    <location>
        <position position="113"/>
    </location>
</feature>
<feature type="binding site" evidence="1">
    <location>
        <position position="21"/>
    </location>
    <ligand>
        <name>alpha-D-glucose 1,6-bisphosphate</name>
        <dbReference type="ChEBI" id="CHEBI:58392"/>
    </ligand>
</feature>
<feature type="binding site" evidence="1">
    <location>
        <position position="113"/>
    </location>
    <ligand>
        <name>alpha-D-glucose 1,6-bisphosphate</name>
        <dbReference type="ChEBI" id="CHEBI:58392"/>
    </ligand>
</feature>
<feature type="binding site" description="via phosphate group" evidence="1">
    <location>
        <position position="113"/>
    </location>
    <ligand>
        <name>Mg(2+)</name>
        <dbReference type="ChEBI" id="CHEBI:18420"/>
    </ligand>
</feature>
<feature type="binding site" evidence="1">
    <location>
        <position position="278"/>
    </location>
    <ligand>
        <name>Mg(2+)</name>
        <dbReference type="ChEBI" id="CHEBI:18420"/>
    </ligand>
</feature>
<feature type="binding site" evidence="1">
    <location>
        <position position="280"/>
    </location>
    <ligand>
        <name>Mg(2+)</name>
        <dbReference type="ChEBI" id="CHEBI:18420"/>
    </ligand>
</feature>
<feature type="binding site" evidence="1">
    <location>
        <position position="282"/>
    </location>
    <ligand>
        <name>alpha-D-glucose 1,6-bisphosphate</name>
        <dbReference type="ChEBI" id="CHEBI:58392"/>
    </ligand>
</feature>
<feature type="binding site" evidence="1">
    <location>
        <position position="282"/>
    </location>
    <ligand>
        <name>Mg(2+)</name>
        <dbReference type="ChEBI" id="CHEBI:18420"/>
    </ligand>
</feature>
<feature type="binding site" evidence="1">
    <location>
        <position position="283"/>
    </location>
    <ligand>
        <name>alpha-D-glucose 1,6-bisphosphate</name>
        <dbReference type="ChEBI" id="CHEBI:58392"/>
    </ligand>
</feature>
<feature type="binding site" evidence="1">
    <location>
        <position position="346"/>
    </location>
    <ligand>
        <name>alpha-D-glucose 1,6-bisphosphate</name>
        <dbReference type="ChEBI" id="CHEBI:58392"/>
    </ligand>
</feature>
<feature type="binding site" evidence="1">
    <location>
        <position position="365"/>
    </location>
    <ligand>
        <name>alpha-D-glucose 1,6-bisphosphate</name>
        <dbReference type="ChEBI" id="CHEBI:58392"/>
    </ligand>
</feature>
<feature type="binding site" evidence="1">
    <location>
        <position position="367"/>
    </location>
    <ligand>
        <name>alpha-D-glucose 1,6-bisphosphate</name>
        <dbReference type="ChEBI" id="CHEBI:58392"/>
    </ligand>
</feature>
<feature type="binding site" evidence="1">
    <location>
        <position position="378"/>
    </location>
    <ligand>
        <name>alpha-D-glucose 1,6-bisphosphate</name>
        <dbReference type="ChEBI" id="CHEBI:58392"/>
    </ligand>
</feature>
<feature type="modified residue" description="Phosphothreonine" evidence="4">
    <location>
        <position position="111"/>
    </location>
</feature>
<feature type="modified residue" description="Phosphoserine" evidence="4">
    <location>
        <position position="113"/>
    </location>
</feature>
<accession>O74374</accession>
<proteinExistence type="evidence at protein level"/>
<dbReference type="EC" id="5.4.2.2" evidence="2"/>
<dbReference type="EMBL" id="CU329671">
    <property type="protein sequence ID" value="CAA19371.1"/>
    <property type="molecule type" value="Genomic_DNA"/>
</dbReference>
<dbReference type="PIR" id="T40234">
    <property type="entry name" value="T40234"/>
</dbReference>
<dbReference type="SMR" id="O74374"/>
<dbReference type="BioGRID" id="276785">
    <property type="interactions" value="2"/>
</dbReference>
<dbReference type="FunCoup" id="O74374">
    <property type="interactions" value="414"/>
</dbReference>
<dbReference type="STRING" id="284812.O74374"/>
<dbReference type="iPTMnet" id="O74374"/>
<dbReference type="PaxDb" id="4896-SPBC32F12.10.1"/>
<dbReference type="EnsemblFungi" id="SPBC32F12.10.1">
    <property type="protein sequence ID" value="SPBC32F12.10.1:pep"/>
    <property type="gene ID" value="SPBC32F12.10"/>
</dbReference>
<dbReference type="KEGG" id="spo:2540254"/>
<dbReference type="PomBase" id="SPBC32F12.10"/>
<dbReference type="VEuPathDB" id="FungiDB:SPBC32F12.10"/>
<dbReference type="eggNOG" id="KOG0625">
    <property type="taxonomic scope" value="Eukaryota"/>
</dbReference>
<dbReference type="HOGENOM" id="CLU_009330_0_1_1"/>
<dbReference type="InParanoid" id="O74374"/>
<dbReference type="OMA" id="WIQDRAN"/>
<dbReference type="PhylomeDB" id="O74374"/>
<dbReference type="Reactome" id="R-SPO-3322077">
    <property type="pathway name" value="Glycogen synthesis"/>
</dbReference>
<dbReference type="Reactome" id="R-SPO-6798695">
    <property type="pathway name" value="Neutrophil degranulation"/>
</dbReference>
<dbReference type="Reactome" id="R-SPO-70221">
    <property type="pathway name" value="Glycogen breakdown (glycogenolysis)"/>
</dbReference>
<dbReference type="Reactome" id="R-SPO-70370">
    <property type="pathway name" value="Galactose catabolism"/>
</dbReference>
<dbReference type="PRO" id="PR:O74374"/>
<dbReference type="Proteomes" id="UP000002485">
    <property type="component" value="Chromosome II"/>
</dbReference>
<dbReference type="GO" id="GO:0005829">
    <property type="term" value="C:cytosol"/>
    <property type="evidence" value="ECO:0007005"/>
    <property type="project" value="PomBase"/>
</dbReference>
<dbReference type="GO" id="GO:0005634">
    <property type="term" value="C:nucleus"/>
    <property type="evidence" value="ECO:0007005"/>
    <property type="project" value="PomBase"/>
</dbReference>
<dbReference type="GO" id="GO:0046872">
    <property type="term" value="F:metal ion binding"/>
    <property type="evidence" value="ECO:0007669"/>
    <property type="project" value="UniProtKB-KW"/>
</dbReference>
<dbReference type="GO" id="GO:0004614">
    <property type="term" value="F:phosphoglucomutase activity"/>
    <property type="evidence" value="ECO:0000318"/>
    <property type="project" value="GO_Central"/>
</dbReference>
<dbReference type="GO" id="GO:0005975">
    <property type="term" value="P:carbohydrate metabolic process"/>
    <property type="evidence" value="ECO:0000318"/>
    <property type="project" value="GO_Central"/>
</dbReference>
<dbReference type="GO" id="GO:0019388">
    <property type="term" value="P:galactose catabolic process"/>
    <property type="evidence" value="ECO:0000266"/>
    <property type="project" value="PomBase"/>
</dbReference>
<dbReference type="GO" id="GO:0051156">
    <property type="term" value="P:glucose 6-phosphate metabolic process"/>
    <property type="evidence" value="ECO:0000266"/>
    <property type="project" value="PomBase"/>
</dbReference>
<dbReference type="GO" id="GO:0006006">
    <property type="term" value="P:glucose metabolic process"/>
    <property type="evidence" value="ECO:0007669"/>
    <property type="project" value="UniProtKB-KW"/>
</dbReference>
<dbReference type="GO" id="GO:0005992">
    <property type="term" value="P:trehalose biosynthetic process"/>
    <property type="evidence" value="ECO:0000266"/>
    <property type="project" value="PomBase"/>
</dbReference>
<dbReference type="GO" id="GO:0006011">
    <property type="term" value="P:UDP-alpha-D-glucose metabolic process"/>
    <property type="evidence" value="ECO:0000266"/>
    <property type="project" value="PomBase"/>
</dbReference>
<dbReference type="CDD" id="cd03085">
    <property type="entry name" value="PGM1"/>
    <property type="match status" value="1"/>
</dbReference>
<dbReference type="FunFam" id="3.30.310.50:FF:000002">
    <property type="entry name" value="Phosphoglucomutase 5"/>
    <property type="match status" value="1"/>
</dbReference>
<dbReference type="FunFam" id="3.40.120.10:FF:000004">
    <property type="entry name" value="Phosphoglucomutase 5"/>
    <property type="match status" value="1"/>
</dbReference>
<dbReference type="FunFam" id="3.40.120.10:FF:000005">
    <property type="entry name" value="Phosphoglucomutase 5"/>
    <property type="match status" value="1"/>
</dbReference>
<dbReference type="FunFam" id="3.40.120.10:FF:000006">
    <property type="entry name" value="Phosphoglucomutase PgmA"/>
    <property type="match status" value="1"/>
</dbReference>
<dbReference type="Gene3D" id="3.40.120.10">
    <property type="entry name" value="Alpha-D-Glucose-1,6-Bisphosphate, subunit A, domain 3"/>
    <property type="match status" value="3"/>
</dbReference>
<dbReference type="Gene3D" id="3.30.310.50">
    <property type="entry name" value="Alpha-D-phosphohexomutase, C-terminal domain"/>
    <property type="match status" value="1"/>
</dbReference>
<dbReference type="InterPro" id="IPR005844">
    <property type="entry name" value="A-D-PHexomutase_a/b/a-I"/>
</dbReference>
<dbReference type="InterPro" id="IPR016055">
    <property type="entry name" value="A-D-PHexomutase_a/b/a-I/II/III"/>
</dbReference>
<dbReference type="InterPro" id="IPR005845">
    <property type="entry name" value="A-D-PHexomutase_a/b/a-II"/>
</dbReference>
<dbReference type="InterPro" id="IPR005846">
    <property type="entry name" value="A-D-PHexomutase_a/b/a-III"/>
</dbReference>
<dbReference type="InterPro" id="IPR036900">
    <property type="entry name" value="A-D-PHexomutase_C_sf"/>
</dbReference>
<dbReference type="InterPro" id="IPR005841">
    <property type="entry name" value="Alpha-D-phosphohexomutase_SF"/>
</dbReference>
<dbReference type="InterPro" id="IPR045244">
    <property type="entry name" value="PGM"/>
</dbReference>
<dbReference type="NCBIfam" id="NF005737">
    <property type="entry name" value="PRK07564.1-1"/>
    <property type="match status" value="1"/>
</dbReference>
<dbReference type="PANTHER" id="PTHR22573:SF2">
    <property type="entry name" value="PHOSPHOGLUCOMUTASE"/>
    <property type="match status" value="1"/>
</dbReference>
<dbReference type="PANTHER" id="PTHR22573">
    <property type="entry name" value="PHOSPHOHEXOMUTASE FAMILY MEMBER"/>
    <property type="match status" value="1"/>
</dbReference>
<dbReference type="Pfam" id="PF24947">
    <property type="entry name" value="PGM1_C_vert_fung"/>
    <property type="match status" value="1"/>
</dbReference>
<dbReference type="Pfam" id="PF02878">
    <property type="entry name" value="PGM_PMM_I"/>
    <property type="match status" value="1"/>
</dbReference>
<dbReference type="Pfam" id="PF02879">
    <property type="entry name" value="PGM_PMM_II"/>
    <property type="match status" value="1"/>
</dbReference>
<dbReference type="Pfam" id="PF02880">
    <property type="entry name" value="PGM_PMM_III"/>
    <property type="match status" value="1"/>
</dbReference>
<dbReference type="PRINTS" id="PR00509">
    <property type="entry name" value="PGMPMM"/>
</dbReference>
<dbReference type="SUPFAM" id="SSF55957">
    <property type="entry name" value="Phosphoglucomutase, C-terminal domain"/>
    <property type="match status" value="1"/>
</dbReference>
<dbReference type="SUPFAM" id="SSF53738">
    <property type="entry name" value="Phosphoglucomutase, first 3 domains"/>
    <property type="match status" value="3"/>
</dbReference>
<keyword id="KW-0119">Carbohydrate metabolism</keyword>
<keyword id="KW-0963">Cytoplasm</keyword>
<keyword id="KW-0313">Glucose metabolism</keyword>
<keyword id="KW-0413">Isomerase</keyword>
<keyword id="KW-0460">Magnesium</keyword>
<keyword id="KW-0479">Metal-binding</keyword>
<keyword id="KW-0539">Nucleus</keyword>
<keyword id="KW-0597">Phosphoprotein</keyword>
<keyword id="KW-1185">Reference proteome</keyword>
<protein>
    <recommendedName>
        <fullName evidence="2">Phosphoglucomutase</fullName>
        <shortName evidence="2">PGM</shortName>
        <ecNumber evidence="2">5.4.2.2</ecNumber>
    </recommendedName>
    <alternativeName>
        <fullName>Glucose phosphomutase</fullName>
    </alternativeName>
</protein>
<gene>
    <name type="ORF">SPBC32F12.10</name>
</gene>
<organism>
    <name type="scientific">Schizosaccharomyces pombe (strain 972 / ATCC 24843)</name>
    <name type="common">Fission yeast</name>
    <dbReference type="NCBI Taxonomy" id="284812"/>
    <lineage>
        <taxon>Eukaryota</taxon>
        <taxon>Fungi</taxon>
        <taxon>Dikarya</taxon>
        <taxon>Ascomycota</taxon>
        <taxon>Taphrinomycotina</taxon>
        <taxon>Schizosaccharomycetes</taxon>
        <taxon>Schizosaccharomycetales</taxon>
        <taxon>Schizosaccharomycetaceae</taxon>
        <taxon>Schizosaccharomyces</taxon>
    </lineage>
</organism>
<reference key="1">
    <citation type="journal article" date="2002" name="Nature">
        <title>The genome sequence of Schizosaccharomyces pombe.</title>
        <authorList>
            <person name="Wood V."/>
            <person name="Gwilliam R."/>
            <person name="Rajandream M.A."/>
            <person name="Lyne M.H."/>
            <person name="Lyne R."/>
            <person name="Stewart A."/>
            <person name="Sgouros J.G."/>
            <person name="Peat N."/>
            <person name="Hayles J."/>
            <person name="Baker S.G."/>
            <person name="Basham D."/>
            <person name="Bowman S."/>
            <person name="Brooks K."/>
            <person name="Brown D."/>
            <person name="Brown S."/>
            <person name="Chillingworth T."/>
            <person name="Churcher C.M."/>
            <person name="Collins M."/>
            <person name="Connor R."/>
            <person name="Cronin A."/>
            <person name="Davis P."/>
            <person name="Feltwell T."/>
            <person name="Fraser A."/>
            <person name="Gentles S."/>
            <person name="Goble A."/>
            <person name="Hamlin N."/>
            <person name="Harris D.E."/>
            <person name="Hidalgo J."/>
            <person name="Hodgson G."/>
            <person name="Holroyd S."/>
            <person name="Hornsby T."/>
            <person name="Howarth S."/>
            <person name="Huckle E.J."/>
            <person name="Hunt S."/>
            <person name="Jagels K."/>
            <person name="James K.D."/>
            <person name="Jones L."/>
            <person name="Jones M."/>
            <person name="Leather S."/>
            <person name="McDonald S."/>
            <person name="McLean J."/>
            <person name="Mooney P."/>
            <person name="Moule S."/>
            <person name="Mungall K.L."/>
            <person name="Murphy L.D."/>
            <person name="Niblett D."/>
            <person name="Odell C."/>
            <person name="Oliver K."/>
            <person name="O'Neil S."/>
            <person name="Pearson D."/>
            <person name="Quail M.A."/>
            <person name="Rabbinowitsch E."/>
            <person name="Rutherford K.M."/>
            <person name="Rutter S."/>
            <person name="Saunders D."/>
            <person name="Seeger K."/>
            <person name="Sharp S."/>
            <person name="Skelton J."/>
            <person name="Simmonds M.N."/>
            <person name="Squares R."/>
            <person name="Squares S."/>
            <person name="Stevens K."/>
            <person name="Taylor K."/>
            <person name="Taylor R.G."/>
            <person name="Tivey A."/>
            <person name="Walsh S.V."/>
            <person name="Warren T."/>
            <person name="Whitehead S."/>
            <person name="Woodward J.R."/>
            <person name="Volckaert G."/>
            <person name="Aert R."/>
            <person name="Robben J."/>
            <person name="Grymonprez B."/>
            <person name="Weltjens I."/>
            <person name="Vanstreels E."/>
            <person name="Rieger M."/>
            <person name="Schaefer M."/>
            <person name="Mueller-Auer S."/>
            <person name="Gabel C."/>
            <person name="Fuchs M."/>
            <person name="Duesterhoeft A."/>
            <person name="Fritzc C."/>
            <person name="Holzer E."/>
            <person name="Moestl D."/>
            <person name="Hilbert H."/>
            <person name="Borzym K."/>
            <person name="Langer I."/>
            <person name="Beck A."/>
            <person name="Lehrach H."/>
            <person name="Reinhardt R."/>
            <person name="Pohl T.M."/>
            <person name="Eger P."/>
            <person name="Zimmermann W."/>
            <person name="Wedler H."/>
            <person name="Wambutt R."/>
            <person name="Purnelle B."/>
            <person name="Goffeau A."/>
            <person name="Cadieu E."/>
            <person name="Dreano S."/>
            <person name="Gloux S."/>
            <person name="Lelaure V."/>
            <person name="Mottier S."/>
            <person name="Galibert F."/>
            <person name="Aves S.J."/>
            <person name="Xiang Z."/>
            <person name="Hunt C."/>
            <person name="Moore K."/>
            <person name="Hurst S.M."/>
            <person name="Lucas M."/>
            <person name="Rochet M."/>
            <person name="Gaillardin C."/>
            <person name="Tallada V.A."/>
            <person name="Garzon A."/>
            <person name="Thode G."/>
            <person name="Daga R.R."/>
            <person name="Cruzado L."/>
            <person name="Jimenez J."/>
            <person name="Sanchez M."/>
            <person name="del Rey F."/>
            <person name="Benito J."/>
            <person name="Dominguez A."/>
            <person name="Revuelta J.L."/>
            <person name="Moreno S."/>
            <person name="Armstrong J."/>
            <person name="Forsburg S.L."/>
            <person name="Cerutti L."/>
            <person name="Lowe T."/>
            <person name="McCombie W.R."/>
            <person name="Paulsen I."/>
            <person name="Potashkin J."/>
            <person name="Shpakovski G.V."/>
            <person name="Ussery D."/>
            <person name="Barrell B.G."/>
            <person name="Nurse P."/>
        </authorList>
    </citation>
    <scope>NUCLEOTIDE SEQUENCE [LARGE SCALE GENOMIC DNA]</scope>
    <source>
        <strain>972 / ATCC 24843</strain>
    </source>
</reference>
<reference key="2">
    <citation type="journal article" date="2006" name="Nat. Biotechnol.">
        <title>ORFeome cloning and global analysis of protein localization in the fission yeast Schizosaccharomyces pombe.</title>
        <authorList>
            <person name="Matsuyama A."/>
            <person name="Arai R."/>
            <person name="Yashiroda Y."/>
            <person name="Shirai A."/>
            <person name="Kamata A."/>
            <person name="Sekido S."/>
            <person name="Kobayashi Y."/>
            <person name="Hashimoto A."/>
            <person name="Hamamoto M."/>
            <person name="Hiraoka Y."/>
            <person name="Horinouchi S."/>
            <person name="Yoshida M."/>
        </authorList>
    </citation>
    <scope>SUBCELLULAR LOCATION [LARGE SCALE ANALYSIS]</scope>
</reference>
<reference key="3">
    <citation type="journal article" date="2008" name="J. Proteome Res.">
        <title>Phosphoproteome analysis of fission yeast.</title>
        <authorList>
            <person name="Wilson-Grady J.T."/>
            <person name="Villen J."/>
            <person name="Gygi S.P."/>
        </authorList>
    </citation>
    <scope>PHOSPHORYLATION [LARGE SCALE ANALYSIS] AT THR-111 AND SER-113</scope>
    <scope>IDENTIFICATION BY MASS SPECTROMETRY</scope>
</reference>